<proteinExistence type="inferred from homology"/>
<gene>
    <name evidence="1" type="primary">nadD</name>
    <name type="ordered locus">TW296</name>
</gene>
<dbReference type="EC" id="2.7.7.18" evidence="1"/>
<dbReference type="EMBL" id="BX251411">
    <property type="protein sequence ID" value="CAD66970.1"/>
    <property type="molecule type" value="Genomic_DNA"/>
</dbReference>
<dbReference type="SMR" id="Q83I10"/>
<dbReference type="KEGG" id="tws:TW296"/>
<dbReference type="HOGENOM" id="CLU_069765_1_1_11"/>
<dbReference type="UniPathway" id="UPA00253">
    <property type="reaction ID" value="UER00332"/>
</dbReference>
<dbReference type="GO" id="GO:0005524">
    <property type="term" value="F:ATP binding"/>
    <property type="evidence" value="ECO:0007669"/>
    <property type="project" value="UniProtKB-KW"/>
</dbReference>
<dbReference type="GO" id="GO:0004515">
    <property type="term" value="F:nicotinate-nucleotide adenylyltransferase activity"/>
    <property type="evidence" value="ECO:0007669"/>
    <property type="project" value="UniProtKB-UniRule"/>
</dbReference>
<dbReference type="GO" id="GO:0009435">
    <property type="term" value="P:NAD biosynthetic process"/>
    <property type="evidence" value="ECO:0007669"/>
    <property type="project" value="UniProtKB-UniRule"/>
</dbReference>
<dbReference type="CDD" id="cd02165">
    <property type="entry name" value="NMNAT"/>
    <property type="match status" value="1"/>
</dbReference>
<dbReference type="FunFam" id="3.40.50.620:FF:000039">
    <property type="entry name" value="Probable nicotinate-nucleotide adenylyltransferase"/>
    <property type="match status" value="1"/>
</dbReference>
<dbReference type="Gene3D" id="3.40.50.620">
    <property type="entry name" value="HUPs"/>
    <property type="match status" value="1"/>
</dbReference>
<dbReference type="HAMAP" id="MF_00244">
    <property type="entry name" value="NaMN_adenylyltr"/>
    <property type="match status" value="1"/>
</dbReference>
<dbReference type="InterPro" id="IPR004821">
    <property type="entry name" value="Cyt_trans-like"/>
</dbReference>
<dbReference type="InterPro" id="IPR005248">
    <property type="entry name" value="NadD/NMNAT"/>
</dbReference>
<dbReference type="InterPro" id="IPR014729">
    <property type="entry name" value="Rossmann-like_a/b/a_fold"/>
</dbReference>
<dbReference type="NCBIfam" id="TIGR00125">
    <property type="entry name" value="cyt_tran_rel"/>
    <property type="match status" value="1"/>
</dbReference>
<dbReference type="NCBIfam" id="TIGR00482">
    <property type="entry name" value="nicotinate (nicotinamide) nucleotide adenylyltransferase"/>
    <property type="match status" value="1"/>
</dbReference>
<dbReference type="NCBIfam" id="NF000840">
    <property type="entry name" value="PRK00071.1-3"/>
    <property type="match status" value="1"/>
</dbReference>
<dbReference type="PANTHER" id="PTHR39321">
    <property type="entry name" value="NICOTINATE-NUCLEOTIDE ADENYLYLTRANSFERASE-RELATED"/>
    <property type="match status" value="1"/>
</dbReference>
<dbReference type="PANTHER" id="PTHR39321:SF3">
    <property type="entry name" value="PHOSPHOPANTETHEINE ADENYLYLTRANSFERASE"/>
    <property type="match status" value="1"/>
</dbReference>
<dbReference type="Pfam" id="PF01467">
    <property type="entry name" value="CTP_transf_like"/>
    <property type="match status" value="1"/>
</dbReference>
<dbReference type="SUPFAM" id="SSF52374">
    <property type="entry name" value="Nucleotidylyl transferase"/>
    <property type="match status" value="1"/>
</dbReference>
<reference key="1">
    <citation type="journal article" date="2003" name="Lancet">
        <title>Sequencing and analysis of the genome of the Whipple's disease bacterium Tropheryma whipplei.</title>
        <authorList>
            <person name="Bentley S.D."/>
            <person name="Maiwald M."/>
            <person name="Murphy L.D."/>
            <person name="Pallen M.J."/>
            <person name="Yeats C.A."/>
            <person name="Dover L.G."/>
            <person name="Norbertczak H.T."/>
            <person name="Besra G.S."/>
            <person name="Quail M.A."/>
            <person name="Harris D.E."/>
            <person name="von Herbay A."/>
            <person name="Goble A."/>
            <person name="Rutter S."/>
            <person name="Squares R."/>
            <person name="Squares S."/>
            <person name="Barrell B.G."/>
            <person name="Parkhill J."/>
            <person name="Relman D.A."/>
        </authorList>
    </citation>
    <scope>NUCLEOTIDE SEQUENCE [LARGE SCALE GENOMIC DNA]</scope>
    <source>
        <strain>TW08/27</strain>
    </source>
</reference>
<sequence length="186" mass="20938">MGGTFDPIHHGHLVVASEVASRFCLDEVIFVPTGRPPHKKEVSDPWHRYLMAVIATASNQRFSVSKIDIERTGPTFTVDTLRELREQLQSSDLFFITGTDALARIFSWKDADTLWSLAHFVAVSRPGHEVVDIPNDRISFLEVPAMAISSSNCRERVRSGLPIWYLVPEGVVQYIAKHGLYRSLYG</sequence>
<evidence type="ECO:0000255" key="1">
    <source>
        <dbReference type="HAMAP-Rule" id="MF_00244"/>
    </source>
</evidence>
<feature type="chain" id="PRO_0000181463" description="Probable nicotinate-nucleotide adenylyltransferase">
    <location>
        <begin position="1"/>
        <end position="186"/>
    </location>
</feature>
<organism>
    <name type="scientific">Tropheryma whipplei (strain TW08/27)</name>
    <name type="common">Whipple's bacillus</name>
    <dbReference type="NCBI Taxonomy" id="218496"/>
    <lineage>
        <taxon>Bacteria</taxon>
        <taxon>Bacillati</taxon>
        <taxon>Actinomycetota</taxon>
        <taxon>Actinomycetes</taxon>
        <taxon>Micrococcales</taxon>
        <taxon>Tropherymataceae</taxon>
        <taxon>Tropheryma</taxon>
    </lineage>
</organism>
<keyword id="KW-0067">ATP-binding</keyword>
<keyword id="KW-0520">NAD</keyword>
<keyword id="KW-0547">Nucleotide-binding</keyword>
<keyword id="KW-0548">Nucleotidyltransferase</keyword>
<keyword id="KW-0662">Pyridine nucleotide biosynthesis</keyword>
<keyword id="KW-0808">Transferase</keyword>
<comment type="function">
    <text evidence="1">Catalyzes the reversible adenylation of nicotinate mononucleotide (NaMN) to nicotinic acid adenine dinucleotide (NaAD).</text>
</comment>
<comment type="catalytic activity">
    <reaction evidence="1">
        <text>nicotinate beta-D-ribonucleotide + ATP + H(+) = deamido-NAD(+) + diphosphate</text>
        <dbReference type="Rhea" id="RHEA:22860"/>
        <dbReference type="ChEBI" id="CHEBI:15378"/>
        <dbReference type="ChEBI" id="CHEBI:30616"/>
        <dbReference type="ChEBI" id="CHEBI:33019"/>
        <dbReference type="ChEBI" id="CHEBI:57502"/>
        <dbReference type="ChEBI" id="CHEBI:58437"/>
        <dbReference type="EC" id="2.7.7.18"/>
    </reaction>
</comment>
<comment type="pathway">
    <text evidence="1">Cofactor biosynthesis; NAD(+) biosynthesis; deamido-NAD(+) from nicotinate D-ribonucleotide: step 1/1.</text>
</comment>
<comment type="similarity">
    <text evidence="1">Belongs to the NadD family.</text>
</comment>
<accession>Q83I10</accession>
<protein>
    <recommendedName>
        <fullName evidence="1">Probable nicotinate-nucleotide adenylyltransferase</fullName>
        <ecNumber evidence="1">2.7.7.18</ecNumber>
    </recommendedName>
    <alternativeName>
        <fullName evidence="1">Deamido-NAD(+) diphosphorylase</fullName>
    </alternativeName>
    <alternativeName>
        <fullName evidence="1">Deamido-NAD(+) pyrophosphorylase</fullName>
    </alternativeName>
    <alternativeName>
        <fullName evidence="1">Nicotinate mononucleotide adenylyltransferase</fullName>
        <shortName evidence="1">NaMN adenylyltransferase</shortName>
    </alternativeName>
</protein>
<name>NADD_TROW8</name>